<gene>
    <name evidence="1" type="primary">pdxT</name>
    <name type="ordered locus">SPG_1393</name>
</gene>
<dbReference type="EC" id="4.3.3.6" evidence="1"/>
<dbReference type="EC" id="3.5.1.2" evidence="1"/>
<dbReference type="EMBL" id="CP001015">
    <property type="protein sequence ID" value="ACF56484.1"/>
    <property type="molecule type" value="Genomic_DNA"/>
</dbReference>
<dbReference type="MEROPS" id="C26.A32"/>
<dbReference type="KEGG" id="spx:SPG_1393"/>
<dbReference type="HOGENOM" id="CLU_069674_2_0_9"/>
<dbReference type="UniPathway" id="UPA00245"/>
<dbReference type="GO" id="GO:0005829">
    <property type="term" value="C:cytosol"/>
    <property type="evidence" value="ECO:0007669"/>
    <property type="project" value="TreeGrafter"/>
</dbReference>
<dbReference type="GO" id="GO:1903600">
    <property type="term" value="C:glutaminase complex"/>
    <property type="evidence" value="ECO:0007669"/>
    <property type="project" value="TreeGrafter"/>
</dbReference>
<dbReference type="GO" id="GO:0004359">
    <property type="term" value="F:glutaminase activity"/>
    <property type="evidence" value="ECO:0007669"/>
    <property type="project" value="UniProtKB-UniRule"/>
</dbReference>
<dbReference type="GO" id="GO:0036381">
    <property type="term" value="F:pyridoxal 5'-phosphate synthase (glutamine hydrolysing) activity"/>
    <property type="evidence" value="ECO:0007669"/>
    <property type="project" value="UniProtKB-UniRule"/>
</dbReference>
<dbReference type="GO" id="GO:0006543">
    <property type="term" value="P:glutamine catabolic process"/>
    <property type="evidence" value="ECO:0007669"/>
    <property type="project" value="UniProtKB-UniRule"/>
</dbReference>
<dbReference type="GO" id="GO:0042823">
    <property type="term" value="P:pyridoxal phosphate biosynthetic process"/>
    <property type="evidence" value="ECO:0007669"/>
    <property type="project" value="UniProtKB-UniRule"/>
</dbReference>
<dbReference type="GO" id="GO:0008614">
    <property type="term" value="P:pyridoxine metabolic process"/>
    <property type="evidence" value="ECO:0007669"/>
    <property type="project" value="TreeGrafter"/>
</dbReference>
<dbReference type="CDD" id="cd01749">
    <property type="entry name" value="GATase1_PB"/>
    <property type="match status" value="1"/>
</dbReference>
<dbReference type="FunFam" id="3.40.50.880:FF:000010">
    <property type="entry name" value="uncharacterized protein LOC100176842 isoform X2"/>
    <property type="match status" value="1"/>
</dbReference>
<dbReference type="Gene3D" id="3.40.50.880">
    <property type="match status" value="1"/>
</dbReference>
<dbReference type="HAMAP" id="MF_01615">
    <property type="entry name" value="PdxT"/>
    <property type="match status" value="1"/>
</dbReference>
<dbReference type="InterPro" id="IPR029062">
    <property type="entry name" value="Class_I_gatase-like"/>
</dbReference>
<dbReference type="InterPro" id="IPR002161">
    <property type="entry name" value="PdxT/SNO"/>
</dbReference>
<dbReference type="InterPro" id="IPR021196">
    <property type="entry name" value="PdxT/SNO_CS"/>
</dbReference>
<dbReference type="NCBIfam" id="TIGR03800">
    <property type="entry name" value="PLP_synth_Pdx2"/>
    <property type="match status" value="1"/>
</dbReference>
<dbReference type="PANTHER" id="PTHR31559">
    <property type="entry name" value="PYRIDOXAL 5'-PHOSPHATE SYNTHASE SUBUNIT SNO"/>
    <property type="match status" value="1"/>
</dbReference>
<dbReference type="PANTHER" id="PTHR31559:SF0">
    <property type="entry name" value="PYRIDOXAL 5'-PHOSPHATE SYNTHASE SUBUNIT SNO1-RELATED"/>
    <property type="match status" value="1"/>
</dbReference>
<dbReference type="Pfam" id="PF01174">
    <property type="entry name" value="SNO"/>
    <property type="match status" value="1"/>
</dbReference>
<dbReference type="PIRSF" id="PIRSF005639">
    <property type="entry name" value="Glut_amidoT_SNO"/>
    <property type="match status" value="1"/>
</dbReference>
<dbReference type="SUPFAM" id="SSF52317">
    <property type="entry name" value="Class I glutamine amidotransferase-like"/>
    <property type="match status" value="1"/>
</dbReference>
<dbReference type="PROSITE" id="PS01236">
    <property type="entry name" value="PDXT_SNO_1"/>
    <property type="match status" value="1"/>
</dbReference>
<dbReference type="PROSITE" id="PS51130">
    <property type="entry name" value="PDXT_SNO_2"/>
    <property type="match status" value="1"/>
</dbReference>
<keyword id="KW-0315">Glutamine amidotransferase</keyword>
<keyword id="KW-0378">Hydrolase</keyword>
<keyword id="KW-0456">Lyase</keyword>
<keyword id="KW-0663">Pyridoxal phosphate</keyword>
<feature type="chain" id="PRO_1000185901" description="Pyridoxal 5'-phosphate synthase subunit PdxT">
    <location>
        <begin position="1"/>
        <end position="193"/>
    </location>
</feature>
<feature type="active site" description="Nucleophile" evidence="1">
    <location>
        <position position="82"/>
    </location>
</feature>
<feature type="active site" description="Charge relay system" evidence="1">
    <location>
        <position position="172"/>
    </location>
</feature>
<feature type="active site" description="Charge relay system" evidence="1">
    <location>
        <position position="174"/>
    </location>
</feature>
<feature type="binding site" evidence="1">
    <location>
        <begin position="50"/>
        <end position="52"/>
    </location>
    <ligand>
        <name>L-glutamine</name>
        <dbReference type="ChEBI" id="CHEBI:58359"/>
    </ligand>
</feature>
<feature type="binding site" evidence="1">
    <location>
        <position position="109"/>
    </location>
    <ligand>
        <name>L-glutamine</name>
        <dbReference type="ChEBI" id="CHEBI:58359"/>
    </ligand>
</feature>
<feature type="binding site" evidence="1">
    <location>
        <begin position="136"/>
        <end position="137"/>
    </location>
    <ligand>
        <name>L-glutamine</name>
        <dbReference type="ChEBI" id="CHEBI:58359"/>
    </ligand>
</feature>
<proteinExistence type="inferred from homology"/>
<reference key="1">
    <citation type="journal article" date="2001" name="Microb. Drug Resist.">
        <title>Annotated draft genomic sequence from a Streptococcus pneumoniae type 19F clinical isolate.</title>
        <authorList>
            <person name="Dopazo J."/>
            <person name="Mendoza A."/>
            <person name="Herrero J."/>
            <person name="Caldara F."/>
            <person name="Humbert Y."/>
            <person name="Friedli L."/>
            <person name="Guerrier M."/>
            <person name="Grand-Schenk E."/>
            <person name="Gandin C."/>
            <person name="de Francesco M."/>
            <person name="Polissi A."/>
            <person name="Buell G."/>
            <person name="Feger G."/>
            <person name="Garcia E."/>
            <person name="Peitsch M."/>
            <person name="Garcia-Bustos J.F."/>
        </authorList>
    </citation>
    <scope>NUCLEOTIDE SEQUENCE [LARGE SCALE GENOMIC DNA]</scope>
    <source>
        <strain>G54</strain>
    </source>
</reference>
<reference key="2">
    <citation type="submission" date="2008-03" db="EMBL/GenBank/DDBJ databases">
        <title>Pneumococcal beta glucoside metabolism investigated by whole genome comparison.</title>
        <authorList>
            <person name="Mulas L."/>
            <person name="Trappetti C."/>
            <person name="Hakenbeck R."/>
            <person name="Iannelli F."/>
            <person name="Pozzi G."/>
            <person name="Davidsen T.M."/>
            <person name="Tettelin H."/>
            <person name="Oggioni M."/>
        </authorList>
    </citation>
    <scope>NUCLEOTIDE SEQUENCE [LARGE SCALE GENOMIC DNA]</scope>
    <source>
        <strain>G54</strain>
    </source>
</reference>
<accession>B5E5W0</accession>
<protein>
    <recommendedName>
        <fullName evidence="1">Pyridoxal 5'-phosphate synthase subunit PdxT</fullName>
        <ecNumber evidence="1">4.3.3.6</ecNumber>
    </recommendedName>
    <alternativeName>
        <fullName evidence="1">Pdx2</fullName>
    </alternativeName>
    <alternativeName>
        <fullName evidence="1">Pyridoxal 5'-phosphate synthase glutaminase subunit</fullName>
        <ecNumber evidence="1">3.5.1.2</ecNumber>
    </alternativeName>
</protein>
<sequence>MKIGILALQGAFAEHAKVLDQLGVESVELRNLDDFQQDQSDLSGLILPGGESTTMGKLLRDQNMLLPIREAILSGLPVFGTCAGLILLAKEITSQKESHLGTMDMVVERNAXGRQLGSFYTEAECKGVGKIPMTFIRGPIISSVGEGVEILATVNNQIVAAQEKNMLVSSFHPELTDDVRLHQYFINMCKEKS</sequence>
<name>PDXT_STRP4</name>
<evidence type="ECO:0000255" key="1">
    <source>
        <dbReference type="HAMAP-Rule" id="MF_01615"/>
    </source>
</evidence>
<organism>
    <name type="scientific">Streptococcus pneumoniae serotype 19F (strain G54)</name>
    <dbReference type="NCBI Taxonomy" id="512566"/>
    <lineage>
        <taxon>Bacteria</taxon>
        <taxon>Bacillati</taxon>
        <taxon>Bacillota</taxon>
        <taxon>Bacilli</taxon>
        <taxon>Lactobacillales</taxon>
        <taxon>Streptococcaceae</taxon>
        <taxon>Streptococcus</taxon>
    </lineage>
</organism>
<comment type="function">
    <text evidence="1">Catalyzes the hydrolysis of glutamine to glutamate and ammonia as part of the biosynthesis of pyridoxal 5'-phosphate. The resulting ammonia molecule is channeled to the active site of PdxS.</text>
</comment>
<comment type="catalytic activity">
    <reaction evidence="1">
        <text>aldehydo-D-ribose 5-phosphate + D-glyceraldehyde 3-phosphate + L-glutamine = pyridoxal 5'-phosphate + L-glutamate + phosphate + 3 H2O + H(+)</text>
        <dbReference type="Rhea" id="RHEA:31507"/>
        <dbReference type="ChEBI" id="CHEBI:15377"/>
        <dbReference type="ChEBI" id="CHEBI:15378"/>
        <dbReference type="ChEBI" id="CHEBI:29985"/>
        <dbReference type="ChEBI" id="CHEBI:43474"/>
        <dbReference type="ChEBI" id="CHEBI:58273"/>
        <dbReference type="ChEBI" id="CHEBI:58359"/>
        <dbReference type="ChEBI" id="CHEBI:59776"/>
        <dbReference type="ChEBI" id="CHEBI:597326"/>
        <dbReference type="EC" id="4.3.3.6"/>
    </reaction>
</comment>
<comment type="catalytic activity">
    <reaction evidence="1">
        <text>L-glutamine + H2O = L-glutamate + NH4(+)</text>
        <dbReference type="Rhea" id="RHEA:15889"/>
        <dbReference type="ChEBI" id="CHEBI:15377"/>
        <dbReference type="ChEBI" id="CHEBI:28938"/>
        <dbReference type="ChEBI" id="CHEBI:29985"/>
        <dbReference type="ChEBI" id="CHEBI:58359"/>
        <dbReference type="EC" id="3.5.1.2"/>
    </reaction>
</comment>
<comment type="pathway">
    <text evidence="1">Cofactor biosynthesis; pyridoxal 5'-phosphate biosynthesis.</text>
</comment>
<comment type="subunit">
    <text evidence="1">In the presence of PdxS, forms a dodecamer of heterodimers. Only shows activity in the heterodimer.</text>
</comment>
<comment type="similarity">
    <text evidence="1">Belongs to the glutaminase PdxT/SNO family.</text>
</comment>